<keyword id="KW-1185">Reference proteome</keyword>
<keyword id="KW-0687">Ribonucleoprotein</keyword>
<keyword id="KW-0689">Ribosomal protein</keyword>
<proteinExistence type="inferred from homology"/>
<name>RL36_BURPS</name>
<feature type="chain" id="PRO_0000126165" description="Large ribosomal subunit protein bL36">
    <location>
        <begin position="1"/>
        <end position="38"/>
    </location>
</feature>
<evidence type="ECO:0000255" key="1">
    <source>
        <dbReference type="HAMAP-Rule" id="MF_00251"/>
    </source>
</evidence>
<evidence type="ECO:0000305" key="2"/>
<gene>
    <name evidence="1" type="primary">rpmJ</name>
    <name type="ordered locus">BPSL3191</name>
</gene>
<organism>
    <name type="scientific">Burkholderia pseudomallei (strain K96243)</name>
    <dbReference type="NCBI Taxonomy" id="272560"/>
    <lineage>
        <taxon>Bacteria</taxon>
        <taxon>Pseudomonadati</taxon>
        <taxon>Pseudomonadota</taxon>
        <taxon>Betaproteobacteria</taxon>
        <taxon>Burkholderiales</taxon>
        <taxon>Burkholderiaceae</taxon>
        <taxon>Burkholderia</taxon>
        <taxon>pseudomallei group</taxon>
    </lineage>
</organism>
<accession>Q63Q33</accession>
<protein>
    <recommendedName>
        <fullName evidence="1">Large ribosomal subunit protein bL36</fullName>
    </recommendedName>
    <alternativeName>
        <fullName evidence="2">50S ribosomal protein L36</fullName>
    </alternativeName>
</protein>
<dbReference type="EMBL" id="BX571965">
    <property type="protein sequence ID" value="CAH37202.1"/>
    <property type="molecule type" value="Genomic_DNA"/>
</dbReference>
<dbReference type="RefSeq" id="WP_004199844.1">
    <property type="nucleotide sequence ID" value="NZ_CP009538.1"/>
</dbReference>
<dbReference type="RefSeq" id="YP_109785.1">
    <property type="nucleotide sequence ID" value="NC_006350.1"/>
</dbReference>
<dbReference type="SMR" id="Q63Q33"/>
<dbReference type="STRING" id="272560.BPSL3191"/>
<dbReference type="GeneID" id="98107138"/>
<dbReference type="KEGG" id="bps:BPSL3191"/>
<dbReference type="PATRIC" id="fig|272560.51.peg.2047"/>
<dbReference type="eggNOG" id="COG0257">
    <property type="taxonomic scope" value="Bacteria"/>
</dbReference>
<dbReference type="PRO" id="PR:Q63Q33"/>
<dbReference type="Proteomes" id="UP000000605">
    <property type="component" value="Chromosome 1"/>
</dbReference>
<dbReference type="GO" id="GO:0005737">
    <property type="term" value="C:cytoplasm"/>
    <property type="evidence" value="ECO:0007669"/>
    <property type="project" value="UniProtKB-ARBA"/>
</dbReference>
<dbReference type="GO" id="GO:1990904">
    <property type="term" value="C:ribonucleoprotein complex"/>
    <property type="evidence" value="ECO:0007669"/>
    <property type="project" value="UniProtKB-KW"/>
</dbReference>
<dbReference type="GO" id="GO:0005840">
    <property type="term" value="C:ribosome"/>
    <property type="evidence" value="ECO:0007669"/>
    <property type="project" value="UniProtKB-KW"/>
</dbReference>
<dbReference type="GO" id="GO:0003735">
    <property type="term" value="F:structural constituent of ribosome"/>
    <property type="evidence" value="ECO:0007669"/>
    <property type="project" value="InterPro"/>
</dbReference>
<dbReference type="GO" id="GO:0006412">
    <property type="term" value="P:translation"/>
    <property type="evidence" value="ECO:0007669"/>
    <property type="project" value="UniProtKB-UniRule"/>
</dbReference>
<dbReference type="HAMAP" id="MF_00251">
    <property type="entry name" value="Ribosomal_bL36"/>
    <property type="match status" value="1"/>
</dbReference>
<dbReference type="InterPro" id="IPR000473">
    <property type="entry name" value="Ribosomal_bL36"/>
</dbReference>
<dbReference type="InterPro" id="IPR035977">
    <property type="entry name" value="Ribosomal_bL36_sp"/>
</dbReference>
<dbReference type="NCBIfam" id="TIGR01022">
    <property type="entry name" value="rpmJ_bact"/>
    <property type="match status" value="1"/>
</dbReference>
<dbReference type="PANTHER" id="PTHR42888">
    <property type="entry name" value="50S RIBOSOMAL PROTEIN L36, CHLOROPLASTIC"/>
    <property type="match status" value="1"/>
</dbReference>
<dbReference type="PANTHER" id="PTHR42888:SF1">
    <property type="entry name" value="LARGE RIBOSOMAL SUBUNIT PROTEIN BL36C"/>
    <property type="match status" value="1"/>
</dbReference>
<dbReference type="Pfam" id="PF00444">
    <property type="entry name" value="Ribosomal_L36"/>
    <property type="match status" value="1"/>
</dbReference>
<dbReference type="SUPFAM" id="SSF57840">
    <property type="entry name" value="Ribosomal protein L36"/>
    <property type="match status" value="1"/>
</dbReference>
<dbReference type="PROSITE" id="PS00828">
    <property type="entry name" value="RIBOSOMAL_L36"/>
    <property type="match status" value="1"/>
</dbReference>
<reference key="1">
    <citation type="journal article" date="2004" name="Proc. Natl. Acad. Sci. U.S.A.">
        <title>Genomic plasticity of the causative agent of melioidosis, Burkholderia pseudomallei.</title>
        <authorList>
            <person name="Holden M.T.G."/>
            <person name="Titball R.W."/>
            <person name="Peacock S.J."/>
            <person name="Cerdeno-Tarraga A.-M."/>
            <person name="Atkins T."/>
            <person name="Crossman L.C."/>
            <person name="Pitt T."/>
            <person name="Churcher C."/>
            <person name="Mungall K.L."/>
            <person name="Bentley S.D."/>
            <person name="Sebaihia M."/>
            <person name="Thomson N.R."/>
            <person name="Bason N."/>
            <person name="Beacham I.R."/>
            <person name="Brooks K."/>
            <person name="Brown K.A."/>
            <person name="Brown N.F."/>
            <person name="Challis G.L."/>
            <person name="Cherevach I."/>
            <person name="Chillingworth T."/>
            <person name="Cronin A."/>
            <person name="Crossett B."/>
            <person name="Davis P."/>
            <person name="DeShazer D."/>
            <person name="Feltwell T."/>
            <person name="Fraser A."/>
            <person name="Hance Z."/>
            <person name="Hauser H."/>
            <person name="Holroyd S."/>
            <person name="Jagels K."/>
            <person name="Keith K.E."/>
            <person name="Maddison M."/>
            <person name="Moule S."/>
            <person name="Price C."/>
            <person name="Quail M.A."/>
            <person name="Rabbinowitsch E."/>
            <person name="Rutherford K."/>
            <person name="Sanders M."/>
            <person name="Simmonds M."/>
            <person name="Songsivilai S."/>
            <person name="Stevens K."/>
            <person name="Tumapa S."/>
            <person name="Vesaratchavest M."/>
            <person name="Whitehead S."/>
            <person name="Yeats C."/>
            <person name="Barrell B.G."/>
            <person name="Oyston P.C.F."/>
            <person name="Parkhill J."/>
        </authorList>
    </citation>
    <scope>NUCLEOTIDE SEQUENCE [LARGE SCALE GENOMIC DNA]</scope>
    <source>
        <strain>K96243</strain>
    </source>
</reference>
<comment type="similarity">
    <text evidence="1">Belongs to the bacterial ribosomal protein bL36 family.</text>
</comment>
<sequence length="38" mass="4410">MKVMASVKRICRNCKIIKRKGVVRVICSSDPRHKQRQG</sequence>